<accession>Q1GSG8</accession>
<comment type="function">
    <text evidence="1">Catalyzes the conversion of urocanate to 4-imidazolone-5-propionate.</text>
</comment>
<comment type="catalytic activity">
    <reaction evidence="1">
        <text>4-imidazolone-5-propanoate = trans-urocanate + H2O</text>
        <dbReference type="Rhea" id="RHEA:13101"/>
        <dbReference type="ChEBI" id="CHEBI:15377"/>
        <dbReference type="ChEBI" id="CHEBI:17771"/>
        <dbReference type="ChEBI" id="CHEBI:77893"/>
        <dbReference type="EC" id="4.2.1.49"/>
    </reaction>
</comment>
<comment type="cofactor">
    <cofactor evidence="1">
        <name>NAD(+)</name>
        <dbReference type="ChEBI" id="CHEBI:57540"/>
    </cofactor>
    <text evidence="1">Binds 1 NAD(+) per subunit.</text>
</comment>
<comment type="pathway">
    <text evidence="1">Amino-acid degradation; L-histidine degradation into L-glutamate; N-formimidoyl-L-glutamate from L-histidine: step 2/3.</text>
</comment>
<comment type="subcellular location">
    <subcellularLocation>
        <location evidence="1">Cytoplasm</location>
    </subcellularLocation>
</comment>
<comment type="similarity">
    <text evidence="1">Belongs to the urocanase family.</text>
</comment>
<organism>
    <name type="scientific">Sphingopyxis alaskensis (strain DSM 13593 / LMG 18877 / RB2256)</name>
    <name type="common">Sphingomonas alaskensis</name>
    <dbReference type="NCBI Taxonomy" id="317655"/>
    <lineage>
        <taxon>Bacteria</taxon>
        <taxon>Pseudomonadati</taxon>
        <taxon>Pseudomonadota</taxon>
        <taxon>Alphaproteobacteria</taxon>
        <taxon>Sphingomonadales</taxon>
        <taxon>Sphingomonadaceae</taxon>
        <taxon>Sphingopyxis</taxon>
    </lineage>
</organism>
<name>HUTU_SPHAL</name>
<gene>
    <name evidence="1" type="primary">hutU</name>
    <name type="ordered locus">Sala_1691</name>
</gene>
<evidence type="ECO:0000255" key="1">
    <source>
        <dbReference type="HAMAP-Rule" id="MF_00577"/>
    </source>
</evidence>
<dbReference type="EC" id="4.2.1.49" evidence="1"/>
<dbReference type="EMBL" id="CP000356">
    <property type="protein sequence ID" value="ABF53404.1"/>
    <property type="molecule type" value="Genomic_DNA"/>
</dbReference>
<dbReference type="RefSeq" id="WP_011541984.1">
    <property type="nucleotide sequence ID" value="NC_008048.1"/>
</dbReference>
<dbReference type="SMR" id="Q1GSG8"/>
<dbReference type="STRING" id="317655.Sala_1691"/>
<dbReference type="KEGG" id="sal:Sala_1691"/>
<dbReference type="eggNOG" id="COG2987">
    <property type="taxonomic scope" value="Bacteria"/>
</dbReference>
<dbReference type="HOGENOM" id="CLU_018868_0_1_5"/>
<dbReference type="OrthoDB" id="9764874at2"/>
<dbReference type="UniPathway" id="UPA00379">
    <property type="reaction ID" value="UER00550"/>
</dbReference>
<dbReference type="Proteomes" id="UP000006578">
    <property type="component" value="Chromosome"/>
</dbReference>
<dbReference type="GO" id="GO:0005737">
    <property type="term" value="C:cytoplasm"/>
    <property type="evidence" value="ECO:0007669"/>
    <property type="project" value="UniProtKB-SubCell"/>
</dbReference>
<dbReference type="GO" id="GO:0016153">
    <property type="term" value="F:urocanate hydratase activity"/>
    <property type="evidence" value="ECO:0007669"/>
    <property type="project" value="UniProtKB-UniRule"/>
</dbReference>
<dbReference type="GO" id="GO:0019556">
    <property type="term" value="P:L-histidine catabolic process to glutamate and formamide"/>
    <property type="evidence" value="ECO:0007669"/>
    <property type="project" value="UniProtKB-UniPathway"/>
</dbReference>
<dbReference type="GO" id="GO:0019557">
    <property type="term" value="P:L-histidine catabolic process to glutamate and formate"/>
    <property type="evidence" value="ECO:0007669"/>
    <property type="project" value="UniProtKB-UniPathway"/>
</dbReference>
<dbReference type="FunFam" id="3.40.50.10730:FF:000001">
    <property type="entry name" value="Urocanate hydratase"/>
    <property type="match status" value="1"/>
</dbReference>
<dbReference type="Gene3D" id="3.40.50.10730">
    <property type="entry name" value="Urocanase like domains"/>
    <property type="match status" value="1"/>
</dbReference>
<dbReference type="Gene3D" id="3.40.1770.10">
    <property type="entry name" value="Urocanase superfamily"/>
    <property type="match status" value="1"/>
</dbReference>
<dbReference type="HAMAP" id="MF_00577">
    <property type="entry name" value="HutU"/>
    <property type="match status" value="1"/>
</dbReference>
<dbReference type="InterPro" id="IPR055351">
    <property type="entry name" value="Urocanase"/>
</dbReference>
<dbReference type="InterPro" id="IPR023637">
    <property type="entry name" value="Urocanase-like"/>
</dbReference>
<dbReference type="InterPro" id="IPR035401">
    <property type="entry name" value="Urocanase_C"/>
</dbReference>
<dbReference type="InterPro" id="IPR038364">
    <property type="entry name" value="Urocanase_central_sf"/>
</dbReference>
<dbReference type="InterPro" id="IPR023636">
    <property type="entry name" value="Urocanase_CS"/>
</dbReference>
<dbReference type="InterPro" id="IPR035400">
    <property type="entry name" value="Urocanase_N"/>
</dbReference>
<dbReference type="InterPro" id="IPR035085">
    <property type="entry name" value="Urocanase_Rossmann-like"/>
</dbReference>
<dbReference type="InterPro" id="IPR036190">
    <property type="entry name" value="Urocanase_sf"/>
</dbReference>
<dbReference type="NCBIfam" id="TIGR01228">
    <property type="entry name" value="hutU"/>
    <property type="match status" value="1"/>
</dbReference>
<dbReference type="NCBIfam" id="NF003820">
    <property type="entry name" value="PRK05414.1"/>
    <property type="match status" value="1"/>
</dbReference>
<dbReference type="PANTHER" id="PTHR12216">
    <property type="entry name" value="UROCANATE HYDRATASE"/>
    <property type="match status" value="1"/>
</dbReference>
<dbReference type="PANTHER" id="PTHR12216:SF4">
    <property type="entry name" value="UROCANATE HYDRATASE"/>
    <property type="match status" value="1"/>
</dbReference>
<dbReference type="Pfam" id="PF01175">
    <property type="entry name" value="Urocanase"/>
    <property type="match status" value="1"/>
</dbReference>
<dbReference type="Pfam" id="PF17392">
    <property type="entry name" value="Urocanase_C"/>
    <property type="match status" value="1"/>
</dbReference>
<dbReference type="Pfam" id="PF17391">
    <property type="entry name" value="Urocanase_N"/>
    <property type="match status" value="1"/>
</dbReference>
<dbReference type="PIRSF" id="PIRSF001423">
    <property type="entry name" value="Urocanate_hydrat"/>
    <property type="match status" value="1"/>
</dbReference>
<dbReference type="SUPFAM" id="SSF111326">
    <property type="entry name" value="Urocanase"/>
    <property type="match status" value="1"/>
</dbReference>
<dbReference type="PROSITE" id="PS01233">
    <property type="entry name" value="UROCANASE"/>
    <property type="match status" value="1"/>
</dbReference>
<feature type="chain" id="PRO_1000025156" description="Urocanate hydratase">
    <location>
        <begin position="1"/>
        <end position="553"/>
    </location>
</feature>
<feature type="active site" evidence="1">
    <location>
        <position position="409"/>
    </location>
</feature>
<feature type="binding site" evidence="1">
    <location>
        <begin position="51"/>
        <end position="52"/>
    </location>
    <ligand>
        <name>NAD(+)</name>
        <dbReference type="ChEBI" id="CHEBI:57540"/>
    </ligand>
</feature>
<feature type="binding site" evidence="1">
    <location>
        <position position="129"/>
    </location>
    <ligand>
        <name>NAD(+)</name>
        <dbReference type="ChEBI" id="CHEBI:57540"/>
    </ligand>
</feature>
<feature type="binding site" evidence="1">
    <location>
        <begin position="175"/>
        <end position="177"/>
    </location>
    <ligand>
        <name>NAD(+)</name>
        <dbReference type="ChEBI" id="CHEBI:57540"/>
    </ligand>
</feature>
<feature type="binding site" evidence="1">
    <location>
        <position position="195"/>
    </location>
    <ligand>
        <name>NAD(+)</name>
        <dbReference type="ChEBI" id="CHEBI:57540"/>
    </ligand>
</feature>
<feature type="binding site" evidence="1">
    <location>
        <position position="200"/>
    </location>
    <ligand>
        <name>NAD(+)</name>
        <dbReference type="ChEBI" id="CHEBI:57540"/>
    </ligand>
</feature>
<feature type="binding site" evidence="1">
    <location>
        <begin position="241"/>
        <end position="242"/>
    </location>
    <ligand>
        <name>NAD(+)</name>
        <dbReference type="ChEBI" id="CHEBI:57540"/>
    </ligand>
</feature>
<feature type="binding site" evidence="1">
    <location>
        <begin position="262"/>
        <end position="266"/>
    </location>
    <ligand>
        <name>NAD(+)</name>
        <dbReference type="ChEBI" id="CHEBI:57540"/>
    </ligand>
</feature>
<feature type="binding site" evidence="1">
    <location>
        <begin position="272"/>
        <end position="273"/>
    </location>
    <ligand>
        <name>NAD(+)</name>
        <dbReference type="ChEBI" id="CHEBI:57540"/>
    </ligand>
</feature>
<feature type="binding site" evidence="1">
    <location>
        <position position="321"/>
    </location>
    <ligand>
        <name>NAD(+)</name>
        <dbReference type="ChEBI" id="CHEBI:57540"/>
    </ligand>
</feature>
<feature type="binding site" evidence="1">
    <location>
        <position position="491"/>
    </location>
    <ligand>
        <name>NAD(+)</name>
        <dbReference type="ChEBI" id="CHEBI:57540"/>
    </ligand>
</feature>
<reference key="1">
    <citation type="journal article" date="2009" name="Proc. Natl. Acad. Sci. U.S.A.">
        <title>The genomic basis of trophic strategy in marine bacteria.</title>
        <authorList>
            <person name="Lauro F.M."/>
            <person name="McDougald D."/>
            <person name="Thomas T."/>
            <person name="Williams T.J."/>
            <person name="Egan S."/>
            <person name="Rice S."/>
            <person name="DeMaere M.Z."/>
            <person name="Ting L."/>
            <person name="Ertan H."/>
            <person name="Johnson J."/>
            <person name="Ferriera S."/>
            <person name="Lapidus A."/>
            <person name="Anderson I."/>
            <person name="Kyrpides N."/>
            <person name="Munk A.C."/>
            <person name="Detter C."/>
            <person name="Han C.S."/>
            <person name="Brown M.V."/>
            <person name="Robb F.T."/>
            <person name="Kjelleberg S."/>
            <person name="Cavicchioli R."/>
        </authorList>
    </citation>
    <scope>NUCLEOTIDE SEQUENCE [LARGE SCALE GENOMIC DNA]</scope>
    <source>
        <strain>DSM 13593 / LMG 18877 / RB2256</strain>
    </source>
</reference>
<protein>
    <recommendedName>
        <fullName evidence="1">Urocanate hydratase</fullName>
        <shortName evidence="1">Urocanase</shortName>
        <ecNumber evidence="1">4.2.1.49</ecNumber>
    </recommendedName>
    <alternativeName>
        <fullName evidence="1">Imidazolonepropionate hydrolase</fullName>
    </alternativeName>
</protein>
<proteinExistence type="inferred from homology"/>
<keyword id="KW-0963">Cytoplasm</keyword>
<keyword id="KW-0369">Histidine metabolism</keyword>
<keyword id="KW-0456">Lyase</keyword>
<keyword id="KW-0520">NAD</keyword>
<keyword id="KW-1185">Reference proteome</keyword>
<sequence length="553" mass="60330">MTRLDNSRVIRPATGPEISAKSWLTEAPMRMLMNNLHPDVAEAPHELVVYGGIGRAARDWESYDRIVETLRRLEGDETLLIQSGKPVGVFRTHADAPRVLLANSNLVPQWANWEHFHELDKKGLMMYGQMTAGSWIYIGSQGIVQGTYETFVEMGRQHYGGDLSGRWLLTAGLGGMGGAQPLAAVMAGASCLAIECQPSRIEMRLRTGYLDRQAASIDEALAMIEASHAEDKPVSVGLLGNAAEILPEIVRRGIRPDLLTDQTSAHDPVNGYLPAGWSLDQWFAKRESDPSAVAKAAKASMAVHVRAMLDLHAAGVPTTDYGNNIRQMAKDEGVENAFDFPGFVPAYVRPLFCRGIGPFRWVALSGDPEDIYRTDARVKQLLPDNTHLHNWLDMARERIQFQGLPARICWVGLGDRHRLGLAFNEMVASGELKAPIVIGRDHLDSGSVASPNRETEAMRDGSDAVSDWPLLNALLNTASGATWVSLHHGGGVGMGYSQHSGMVIVADGTPEAAKRLERVLWNDPGTGVMRHADAGYDIAIDCAREKGLDLPSI</sequence>